<accession>Q9PQ36</accession>
<protein>
    <recommendedName>
        <fullName>Probable cysteine desulfurase</fullName>
        <ecNumber>2.8.1.7</ecNumber>
    </recommendedName>
</protein>
<dbReference type="EC" id="2.8.1.7"/>
<dbReference type="EMBL" id="AF222894">
    <property type="protein sequence ID" value="AAF30866.1"/>
    <property type="molecule type" value="Genomic_DNA"/>
</dbReference>
<dbReference type="RefSeq" id="WP_006689089.1">
    <property type="nucleotide sequence ID" value="NC_002162.1"/>
</dbReference>
<dbReference type="SMR" id="Q9PQ36"/>
<dbReference type="STRING" id="273119.UU454"/>
<dbReference type="REBASE" id="203824">
    <property type="entry name" value="M.Bli1441DndAP"/>
</dbReference>
<dbReference type="EnsemblBacteria" id="AAF30866">
    <property type="protein sequence ID" value="AAF30866"/>
    <property type="gene ID" value="UU454"/>
</dbReference>
<dbReference type="GeneID" id="29672596"/>
<dbReference type="KEGG" id="uur:UU454"/>
<dbReference type="eggNOG" id="COG0520">
    <property type="taxonomic scope" value="Bacteria"/>
</dbReference>
<dbReference type="HOGENOM" id="CLU_003433_2_5_14"/>
<dbReference type="OrthoDB" id="9804366at2"/>
<dbReference type="Proteomes" id="UP000000423">
    <property type="component" value="Chromosome"/>
</dbReference>
<dbReference type="GO" id="GO:0031071">
    <property type="term" value="F:cysteine desulfurase activity"/>
    <property type="evidence" value="ECO:0007669"/>
    <property type="project" value="UniProtKB-EC"/>
</dbReference>
<dbReference type="Gene3D" id="3.90.1150.10">
    <property type="entry name" value="Aspartate Aminotransferase, domain 1"/>
    <property type="match status" value="1"/>
</dbReference>
<dbReference type="Gene3D" id="3.40.640.10">
    <property type="entry name" value="Type I PLP-dependent aspartate aminotransferase-like (Major domain)"/>
    <property type="match status" value="1"/>
</dbReference>
<dbReference type="InterPro" id="IPR000192">
    <property type="entry name" value="Aminotrans_V_dom"/>
</dbReference>
<dbReference type="InterPro" id="IPR015424">
    <property type="entry name" value="PyrdxlP-dep_Trfase"/>
</dbReference>
<dbReference type="InterPro" id="IPR015421">
    <property type="entry name" value="PyrdxlP-dep_Trfase_major"/>
</dbReference>
<dbReference type="InterPro" id="IPR015422">
    <property type="entry name" value="PyrdxlP-dep_Trfase_small"/>
</dbReference>
<dbReference type="PANTHER" id="PTHR43586">
    <property type="entry name" value="CYSTEINE DESULFURASE"/>
    <property type="match status" value="1"/>
</dbReference>
<dbReference type="PANTHER" id="PTHR43586:SF8">
    <property type="entry name" value="CYSTEINE DESULFURASE 1, CHLOROPLASTIC"/>
    <property type="match status" value="1"/>
</dbReference>
<dbReference type="Pfam" id="PF00266">
    <property type="entry name" value="Aminotran_5"/>
    <property type="match status" value="1"/>
</dbReference>
<dbReference type="SUPFAM" id="SSF53383">
    <property type="entry name" value="PLP-dependent transferases"/>
    <property type="match status" value="1"/>
</dbReference>
<organism>
    <name type="scientific">Ureaplasma parvum serovar 3 (strain ATCC 700970)</name>
    <dbReference type="NCBI Taxonomy" id="273119"/>
    <lineage>
        <taxon>Bacteria</taxon>
        <taxon>Bacillati</taxon>
        <taxon>Mycoplasmatota</taxon>
        <taxon>Mycoplasmoidales</taxon>
        <taxon>Mycoplasmoidaceae</taxon>
        <taxon>Ureaplasma</taxon>
    </lineage>
</organism>
<comment type="function">
    <text evidence="1">Catalyzes the removal of elemental sulfur and selenium atoms from L-cysteine, L-cystine, L-selenocysteine, and L-selenocystine to produce L-alanine.</text>
</comment>
<comment type="catalytic activity">
    <reaction>
        <text>(sulfur carrier)-H + L-cysteine = (sulfur carrier)-SH + L-alanine</text>
        <dbReference type="Rhea" id="RHEA:43892"/>
        <dbReference type="Rhea" id="RHEA-COMP:14737"/>
        <dbReference type="Rhea" id="RHEA-COMP:14739"/>
        <dbReference type="ChEBI" id="CHEBI:29917"/>
        <dbReference type="ChEBI" id="CHEBI:35235"/>
        <dbReference type="ChEBI" id="CHEBI:57972"/>
        <dbReference type="ChEBI" id="CHEBI:64428"/>
        <dbReference type="EC" id="2.8.1.7"/>
    </reaction>
</comment>
<comment type="cofactor">
    <cofactor evidence="1">
        <name>pyridoxal 5'-phosphate</name>
        <dbReference type="ChEBI" id="CHEBI:597326"/>
    </cofactor>
</comment>
<comment type="similarity">
    <text evidence="2">Belongs to the class-V pyridoxal-phosphate-dependent aminotransferase family. Csd subfamily.</text>
</comment>
<gene>
    <name type="primary">csd</name>
    <name type="ordered locus">UU454</name>
</gene>
<evidence type="ECO:0000250" key="1"/>
<evidence type="ECO:0000305" key="2"/>
<proteinExistence type="inferred from homology"/>
<reference key="1">
    <citation type="journal article" date="2000" name="Nature">
        <title>The complete sequence of the mucosal pathogen Ureaplasma urealyticum.</title>
        <authorList>
            <person name="Glass J.I."/>
            <person name="Lefkowitz E.J."/>
            <person name="Glass J.S."/>
            <person name="Heiner C.R."/>
            <person name="Chen E.Y."/>
            <person name="Cassell G.H."/>
        </authorList>
    </citation>
    <scope>NUCLEOTIDE SEQUENCE [LARGE SCALE GENOMIC DNA]</scope>
    <source>
        <strain>ATCC 700970</strain>
    </source>
</reference>
<sequence>MNDYKQFFPWFKNNKDVIYLDSSATSLKPQVVIDAIVDYYTKYSTNPHNTDSNFTFHTHEIMNETRANVAKFINANFDEIIFTSGATESLNLIANGLRPHLKKGDEIILTYIEHASNLLPWYKLRDDLGVKIIFANQKNQFPQLSDFLKVISPKTKVVSFASGGNLIGNVLDENLIIKNIKKIKPDVLVCVDATQSIQHRMFDVKKCKSDFMVFSAHKLLGPTGIGVAYIKNDLIKKMQPLKYGGGMNFSIDLNSYQLYDNYMKFEGGTPHVAGFYGFNAALKFLMDIGYNKIHEHELKITKYARDQLALIPEIKTYVQDATSSTITFSYNGVFCQDFANYLGSKNIIVRSGLSCAKIINNVIQTECAIRASFYIYNDFNDVDRLIKAIKEYQKGDELNGIL</sequence>
<keyword id="KW-0663">Pyridoxal phosphate</keyword>
<keyword id="KW-1185">Reference proteome</keyword>
<keyword id="KW-0808">Transferase</keyword>
<name>CSD_UREPA</name>
<feature type="chain" id="PRO_0000150321" description="Probable cysteine desulfurase">
    <location>
        <begin position="1"/>
        <end position="402"/>
    </location>
</feature>
<feature type="modified residue" description="N6-(pyridoxal phosphate)lysine" evidence="1">
    <location>
        <position position="218"/>
    </location>
</feature>